<organism>
    <name type="scientific">Plasmodium vivax (strain Salvador I)</name>
    <dbReference type="NCBI Taxonomy" id="126793"/>
    <lineage>
        <taxon>Eukaryota</taxon>
        <taxon>Sar</taxon>
        <taxon>Alveolata</taxon>
        <taxon>Apicomplexa</taxon>
        <taxon>Aconoidasida</taxon>
        <taxon>Haemosporida</taxon>
        <taxon>Plasmodiidae</taxon>
        <taxon>Plasmodium</taxon>
        <taxon>Plasmodium (Plasmodium)</taxon>
    </lineage>
</organism>
<protein>
    <recommendedName>
        <fullName evidence="2">Protein SEY1 homolog</fullName>
        <ecNumber evidence="2">3.6.5.-</ecNumber>
    </recommendedName>
</protein>
<feature type="chain" id="PRO_0000384957" description="Protein SEY1 homolog">
    <location>
        <begin position="1"/>
        <end position="889"/>
    </location>
</feature>
<feature type="topological domain" description="Cytoplasmic" evidence="2">
    <location>
        <begin position="1"/>
        <end position="801"/>
    </location>
</feature>
<feature type="transmembrane region" description="Helical" evidence="2">
    <location>
        <begin position="802"/>
        <end position="822"/>
    </location>
</feature>
<feature type="topological domain" description="Lumenal" evidence="2">
    <location>
        <begin position="823"/>
        <end position="825"/>
    </location>
</feature>
<feature type="transmembrane region" description="Helical" evidence="2">
    <location>
        <begin position="826"/>
        <end position="846"/>
    </location>
</feature>
<feature type="topological domain" description="Cytoplasmic" evidence="2">
    <location>
        <begin position="847"/>
        <end position="889"/>
    </location>
</feature>
<feature type="domain" description="GB1/RHD3-type G" evidence="3">
    <location>
        <begin position="31"/>
        <end position="277"/>
    </location>
</feature>
<feature type="region of interest" description="Disordered" evidence="4">
    <location>
        <begin position="429"/>
        <end position="449"/>
    </location>
</feature>
<feature type="coiled-coil region" evidence="2">
    <location>
        <begin position="679"/>
        <end position="699"/>
    </location>
</feature>
<feature type="binding site" evidence="2">
    <location>
        <begin position="41"/>
        <end position="48"/>
    </location>
    <ligand>
        <name>GTP</name>
        <dbReference type="ChEBI" id="CHEBI:37565"/>
    </ligand>
</feature>
<dbReference type="EC" id="3.6.5.-" evidence="2"/>
<dbReference type="EMBL" id="AAKM01000002">
    <property type="protein sequence ID" value="EDL47065.1"/>
    <property type="molecule type" value="Genomic_DNA"/>
</dbReference>
<dbReference type="RefSeq" id="XP_001616792.1">
    <property type="nucleotide sequence ID" value="XM_001616742.1"/>
</dbReference>
<dbReference type="SMR" id="A5K168"/>
<dbReference type="FunCoup" id="A5K168">
    <property type="interactions" value="5"/>
</dbReference>
<dbReference type="STRING" id="126793.A5K168"/>
<dbReference type="EnsemblProtists" id="EDL47065">
    <property type="protein sequence ID" value="EDL47065"/>
    <property type="gene ID" value="PVX_085645"/>
</dbReference>
<dbReference type="GeneID" id="5476100"/>
<dbReference type="KEGG" id="pvx:PVX_085645"/>
<dbReference type="VEuPathDB" id="PlasmoDB:PVX_085645"/>
<dbReference type="InParanoid" id="A5K168"/>
<dbReference type="OMA" id="WREISMA"/>
<dbReference type="PhylomeDB" id="A5K168"/>
<dbReference type="Proteomes" id="UP000008333">
    <property type="component" value="Chromosome 13"/>
</dbReference>
<dbReference type="GO" id="GO:0005789">
    <property type="term" value="C:endoplasmic reticulum membrane"/>
    <property type="evidence" value="ECO:0007669"/>
    <property type="project" value="UniProtKB-SubCell"/>
</dbReference>
<dbReference type="GO" id="GO:0005525">
    <property type="term" value="F:GTP binding"/>
    <property type="evidence" value="ECO:0007669"/>
    <property type="project" value="UniProtKB-UniRule"/>
</dbReference>
<dbReference type="GO" id="GO:0003924">
    <property type="term" value="F:GTPase activity"/>
    <property type="evidence" value="ECO:0007669"/>
    <property type="project" value="UniProtKB-UniRule"/>
</dbReference>
<dbReference type="GO" id="GO:0016320">
    <property type="term" value="P:endoplasmic reticulum membrane fusion"/>
    <property type="evidence" value="ECO:0007669"/>
    <property type="project" value="TreeGrafter"/>
</dbReference>
<dbReference type="CDD" id="cd01851">
    <property type="entry name" value="GBP"/>
    <property type="match status" value="1"/>
</dbReference>
<dbReference type="FunFam" id="3.40.50.300:FF:000727">
    <property type="entry name" value="Protein SEY1 homolog"/>
    <property type="match status" value="1"/>
</dbReference>
<dbReference type="Gene3D" id="3.40.50.300">
    <property type="entry name" value="P-loop containing nucleotide triphosphate hydrolases"/>
    <property type="match status" value="1"/>
</dbReference>
<dbReference type="HAMAP" id="MF_03109">
    <property type="entry name" value="Sey1"/>
    <property type="match status" value="1"/>
</dbReference>
<dbReference type="InterPro" id="IPR030386">
    <property type="entry name" value="G_GB1_RHD3_dom"/>
</dbReference>
<dbReference type="InterPro" id="IPR027417">
    <property type="entry name" value="P-loop_NTPase"/>
</dbReference>
<dbReference type="InterPro" id="IPR008803">
    <property type="entry name" value="RHD3/Sey1"/>
</dbReference>
<dbReference type="PANTHER" id="PTHR45923">
    <property type="entry name" value="PROTEIN SEY1"/>
    <property type="match status" value="1"/>
</dbReference>
<dbReference type="PANTHER" id="PTHR45923:SF2">
    <property type="entry name" value="PROTEIN SEY1"/>
    <property type="match status" value="1"/>
</dbReference>
<dbReference type="Pfam" id="PF05879">
    <property type="entry name" value="RHD3_GTPase"/>
    <property type="match status" value="1"/>
</dbReference>
<dbReference type="SUPFAM" id="SSF52540">
    <property type="entry name" value="P-loop containing nucleoside triphosphate hydrolases"/>
    <property type="match status" value="1"/>
</dbReference>
<dbReference type="PROSITE" id="PS51715">
    <property type="entry name" value="G_GB1_RHD3"/>
    <property type="match status" value="1"/>
</dbReference>
<comment type="function">
    <text evidence="1">Probable GTP-binding protein involved in generating and maintaining the structure of the tubular endoplasmic reticulum network.</text>
</comment>
<comment type="subcellular location">
    <subcellularLocation>
        <location evidence="2">Endoplasmic reticulum membrane</location>
        <topology evidence="2">Multi-pass membrane protein</topology>
    </subcellularLocation>
</comment>
<comment type="similarity">
    <text evidence="3">Belongs to the TRAFAC class dynamin-like GTPase superfamily. GB1/RHD3 GTPase family. RHD3 subfamily.</text>
</comment>
<keyword id="KW-0175">Coiled coil</keyword>
<keyword id="KW-0256">Endoplasmic reticulum</keyword>
<keyword id="KW-0342">GTP-binding</keyword>
<keyword id="KW-0378">Hydrolase</keyword>
<keyword id="KW-0472">Membrane</keyword>
<keyword id="KW-0547">Nucleotide-binding</keyword>
<keyword id="KW-1185">Reference proteome</keyword>
<keyword id="KW-0812">Transmembrane</keyword>
<keyword id="KW-1133">Transmembrane helix</keyword>
<evidence type="ECO:0000250" key="1">
    <source>
        <dbReference type="UniProtKB" id="A0A509AN59"/>
    </source>
</evidence>
<evidence type="ECO:0000255" key="2">
    <source>
        <dbReference type="HAMAP-Rule" id="MF_03109"/>
    </source>
</evidence>
<evidence type="ECO:0000255" key="3">
    <source>
        <dbReference type="PROSITE-ProRule" id="PRU01052"/>
    </source>
</evidence>
<evidence type="ECO:0000256" key="4">
    <source>
        <dbReference type="SAM" id="MobiDB-lite"/>
    </source>
</evidence>
<reference key="1">
    <citation type="journal article" date="2008" name="Nature">
        <title>Comparative genomics of the neglected human malaria parasite Plasmodium vivax.</title>
        <authorList>
            <person name="Carlton J.M."/>
            <person name="Adams J.H."/>
            <person name="Silva J.C."/>
            <person name="Bidwell S.L."/>
            <person name="Lorenzi H."/>
            <person name="Caler E."/>
            <person name="Crabtree J."/>
            <person name="Angiuoli S.V."/>
            <person name="Merino E.F."/>
            <person name="Amedeo P."/>
            <person name="Cheng Q."/>
            <person name="Coulson R.M.R."/>
            <person name="Crabb B.S."/>
            <person name="del Portillo H.A."/>
            <person name="Essien K."/>
            <person name="Feldblyum T.V."/>
            <person name="Fernandez-Becerra C."/>
            <person name="Gilson P.R."/>
            <person name="Gueye A.H."/>
            <person name="Guo X."/>
            <person name="Kang'a S."/>
            <person name="Kooij T.W.A."/>
            <person name="Korsinczky M."/>
            <person name="Meyer E.V.-S."/>
            <person name="Nene V."/>
            <person name="Paulsen I."/>
            <person name="White O."/>
            <person name="Ralph S.A."/>
            <person name="Ren Q."/>
            <person name="Sargeant T.J."/>
            <person name="Salzberg S.L."/>
            <person name="Stoeckert C.J."/>
            <person name="Sullivan S.A."/>
            <person name="Yamamoto M.M."/>
            <person name="Hoffman S.L."/>
            <person name="Wortman J.R."/>
            <person name="Gardner M.J."/>
            <person name="Galinski M.R."/>
            <person name="Barnwell J.W."/>
            <person name="Fraser-Liggett C.M."/>
        </authorList>
    </citation>
    <scope>NUCLEOTIDE SEQUENCE [LARGE SCALE GENOMIC DNA]</scope>
    <source>
        <strain>Salvador I</strain>
    </source>
</reference>
<sequence>MDTKTQIIDYDGNIMEDLKEWMIRNKLANLGFNYNVIAILGSQSSGKSTLLNNLFKTSFDVMNTKLGHSQTTQGLWLSFDTFEDSSAGPSEQGSTTRKVNPTLILDVEGNDSKERGDNRLTFEHRSALFSLALADCVIVNLWYHSLGNFTASNYGLLKTVMEVNLELFQQDENCPKTILLFTVRDWFEEFASIDIVKNKIVEEYLNKIWTEMKKPPEAEKVNISNYFIVEVVGLSHGIIKKEEFLKDVENLRQKWINQLRPLQYSRNIPSDGFAHYCNNIWNTIVKQSQLDIPSQKEMLATFRCQEIKNNVISNASKVIKEKLAASSSQHSSTSIDEFKPWAEKEVVEKSLDEYFVDASRYTESICLKTSEELLDSLFIQLQTIVDNNLNFTQRVLAAKFANELNTMYSVCASDKNVFLFSKESNLQVRKDGKGGSSPSAGDKKDTKDTRSSQDKCIRLWSSFLLNADKLEYNTLCKFFEDYQKCNIEVKKRNKTHEFNYKPSLSILSTAICKDLNRIRNAQLTVLLDRTRATIKSRFKNMESLLITTKNPEEYWNHTLKIVKALQESINSNLTKCFINLKGGGAGPGSITTAGIIPNGGLYNDEDNTFHEDNLVEAHNSLSDNQTGHENDHYVEENLLNFHKIDVIKNKGKYISTVGEEIDKQVKNKNAIAELNSYYLDEIMDVLKSKLDEISDNLSSIIIQRFESVFNYDDAEQPRQWREISMAELKKIFRESKNYAFLIIDILQKNVQVEIIDDYLPNNFIKDEIVEKGKNKAKRKIQEMCRDAQYIQETGAKMSLKNVPLFFWVILLILGWNELLFFTRFFFRLNIILPLFLAAAVILSTLVFNGNMEVLSIINKAVFFLAKNSFGVYRQLQAMGGKAAQGAAAD</sequence>
<name>SEY1_PLAVS</name>
<accession>A5K168</accession>
<proteinExistence type="inferred from homology"/>
<gene>
    <name evidence="1" type="primary">SEY1</name>
    <name type="ORF">PVX_085645</name>
</gene>